<proteinExistence type="inferred from homology"/>
<dbReference type="EMBL" id="CP000814">
    <property type="protein sequence ID" value="ABV51729.1"/>
    <property type="molecule type" value="Genomic_DNA"/>
</dbReference>
<dbReference type="RefSeq" id="WP_002778650.1">
    <property type="nucleotide sequence ID" value="NC_009839.1"/>
</dbReference>
<dbReference type="SMR" id="A8FJU2"/>
<dbReference type="GeneID" id="66544860"/>
<dbReference type="KEGG" id="cju:C8J_0130"/>
<dbReference type="HOGENOM" id="CLU_089475_6_5_7"/>
<dbReference type="GO" id="GO:0005737">
    <property type="term" value="C:cytoplasm"/>
    <property type="evidence" value="ECO:0007669"/>
    <property type="project" value="UniProtKB-SubCell"/>
</dbReference>
<dbReference type="GO" id="GO:0030490">
    <property type="term" value="P:maturation of SSU-rRNA"/>
    <property type="evidence" value="ECO:0007669"/>
    <property type="project" value="UniProtKB-UniRule"/>
</dbReference>
<dbReference type="Gene3D" id="3.30.300.20">
    <property type="match status" value="1"/>
</dbReference>
<dbReference type="HAMAP" id="MF_00003">
    <property type="entry name" value="RbfA"/>
    <property type="match status" value="1"/>
</dbReference>
<dbReference type="InterPro" id="IPR015946">
    <property type="entry name" value="KH_dom-like_a/b"/>
</dbReference>
<dbReference type="InterPro" id="IPR000238">
    <property type="entry name" value="RbfA"/>
</dbReference>
<dbReference type="InterPro" id="IPR023799">
    <property type="entry name" value="RbfA_dom_sf"/>
</dbReference>
<dbReference type="InterPro" id="IPR020053">
    <property type="entry name" value="Ribosome-bd_factorA_CS"/>
</dbReference>
<dbReference type="NCBIfam" id="NF001805">
    <property type="entry name" value="PRK00521.3-3"/>
    <property type="match status" value="1"/>
</dbReference>
<dbReference type="NCBIfam" id="NF001806">
    <property type="entry name" value="PRK00521.3-4"/>
    <property type="match status" value="1"/>
</dbReference>
<dbReference type="NCBIfam" id="TIGR00082">
    <property type="entry name" value="rbfA"/>
    <property type="match status" value="1"/>
</dbReference>
<dbReference type="Pfam" id="PF02033">
    <property type="entry name" value="RBFA"/>
    <property type="match status" value="1"/>
</dbReference>
<dbReference type="SUPFAM" id="SSF89919">
    <property type="entry name" value="Ribosome-binding factor A, RbfA"/>
    <property type="match status" value="1"/>
</dbReference>
<dbReference type="PROSITE" id="PS01319">
    <property type="entry name" value="RBFA"/>
    <property type="match status" value="1"/>
</dbReference>
<comment type="function">
    <text evidence="1">One of several proteins that assist in the late maturation steps of the functional core of the 30S ribosomal subunit. Associates with free 30S ribosomal subunits (but not with 30S subunits that are part of 70S ribosomes or polysomes). Required for efficient processing of 16S rRNA. May interact with the 5'-terminal helix region of 16S rRNA.</text>
</comment>
<comment type="subunit">
    <text evidence="1">Monomer. Binds 30S ribosomal subunits, but not 50S ribosomal subunits or 70S ribosomes.</text>
</comment>
<comment type="subcellular location">
    <subcellularLocation>
        <location evidence="1">Cytoplasm</location>
    </subcellularLocation>
</comment>
<comment type="similarity">
    <text evidence="1">Belongs to the RbfA family.</text>
</comment>
<accession>A8FJU2</accession>
<reference key="1">
    <citation type="journal article" date="2007" name="J. Bacteriol.">
        <title>The complete genome sequence of Campylobacter jejuni strain 81116 (NCTC11828).</title>
        <authorList>
            <person name="Pearson B.M."/>
            <person name="Gaskin D.J.H."/>
            <person name="Segers R.P.A.M."/>
            <person name="Wells J.M."/>
            <person name="Nuijten P.J.M."/>
            <person name="van Vliet A.H.M."/>
        </authorList>
    </citation>
    <scope>NUCLEOTIDE SEQUENCE [LARGE SCALE GENOMIC DNA]</scope>
    <source>
        <strain>81116 / NCTC 11828</strain>
    </source>
</reference>
<feature type="chain" id="PRO_1000070904" description="Ribosome-binding factor A">
    <location>
        <begin position="1"/>
        <end position="120"/>
    </location>
</feature>
<sequence>MNPSEIKKLRTESILKELIPEALANLDDENLKNLCVVDVECKKGRYDAFVYLDKMFFNVHEQEKILSSLKKASRALQNYCMSEQGWYRCPNFHFKFDDRLEYQNHMDALFEKIKKDKNES</sequence>
<name>RBFA_CAMJ8</name>
<keyword id="KW-0963">Cytoplasm</keyword>
<keyword id="KW-0690">Ribosome biogenesis</keyword>
<evidence type="ECO:0000255" key="1">
    <source>
        <dbReference type="HAMAP-Rule" id="MF_00003"/>
    </source>
</evidence>
<organism>
    <name type="scientific">Campylobacter jejuni subsp. jejuni serotype O:6 (strain 81116 / NCTC 11828)</name>
    <dbReference type="NCBI Taxonomy" id="407148"/>
    <lineage>
        <taxon>Bacteria</taxon>
        <taxon>Pseudomonadati</taxon>
        <taxon>Campylobacterota</taxon>
        <taxon>Epsilonproteobacteria</taxon>
        <taxon>Campylobacterales</taxon>
        <taxon>Campylobacteraceae</taxon>
        <taxon>Campylobacter</taxon>
    </lineage>
</organism>
<protein>
    <recommendedName>
        <fullName evidence="1">Ribosome-binding factor A</fullName>
    </recommendedName>
</protein>
<gene>
    <name evidence="1" type="primary">rbfA</name>
    <name type="ordered locus">C8J_0130</name>
</gene>